<dbReference type="EC" id="7.1.1.-" evidence="1"/>
<dbReference type="EMBL" id="CU207211">
    <property type="protein sequence ID" value="CAL61968.1"/>
    <property type="molecule type" value="Genomic_DNA"/>
</dbReference>
<dbReference type="SMR" id="A4G631"/>
<dbReference type="STRING" id="204773.HEAR1813"/>
<dbReference type="KEGG" id="har:HEAR1813"/>
<dbReference type="eggNOG" id="COG1007">
    <property type="taxonomic scope" value="Bacteria"/>
</dbReference>
<dbReference type="HOGENOM" id="CLU_007100_1_3_4"/>
<dbReference type="OrthoDB" id="9768329at2"/>
<dbReference type="Proteomes" id="UP000006697">
    <property type="component" value="Chromosome"/>
</dbReference>
<dbReference type="GO" id="GO:0005886">
    <property type="term" value="C:plasma membrane"/>
    <property type="evidence" value="ECO:0007669"/>
    <property type="project" value="UniProtKB-SubCell"/>
</dbReference>
<dbReference type="GO" id="GO:0008137">
    <property type="term" value="F:NADH dehydrogenase (ubiquinone) activity"/>
    <property type="evidence" value="ECO:0007669"/>
    <property type="project" value="InterPro"/>
</dbReference>
<dbReference type="GO" id="GO:0050136">
    <property type="term" value="F:NADH:ubiquinone reductase (non-electrogenic) activity"/>
    <property type="evidence" value="ECO:0007669"/>
    <property type="project" value="UniProtKB-UniRule"/>
</dbReference>
<dbReference type="GO" id="GO:0048038">
    <property type="term" value="F:quinone binding"/>
    <property type="evidence" value="ECO:0007669"/>
    <property type="project" value="UniProtKB-KW"/>
</dbReference>
<dbReference type="GO" id="GO:0042773">
    <property type="term" value="P:ATP synthesis coupled electron transport"/>
    <property type="evidence" value="ECO:0007669"/>
    <property type="project" value="InterPro"/>
</dbReference>
<dbReference type="HAMAP" id="MF_00445">
    <property type="entry name" value="NDH1_NuoN_1"/>
    <property type="match status" value="1"/>
</dbReference>
<dbReference type="InterPro" id="IPR010096">
    <property type="entry name" value="NADH-Q_OxRdtase_suN/2"/>
</dbReference>
<dbReference type="InterPro" id="IPR001750">
    <property type="entry name" value="ND/Mrp_TM"/>
</dbReference>
<dbReference type="NCBIfam" id="TIGR01770">
    <property type="entry name" value="NDH_I_N"/>
    <property type="match status" value="1"/>
</dbReference>
<dbReference type="NCBIfam" id="NF004442">
    <property type="entry name" value="PRK05777.1-5"/>
    <property type="match status" value="1"/>
</dbReference>
<dbReference type="PANTHER" id="PTHR22773">
    <property type="entry name" value="NADH DEHYDROGENASE"/>
    <property type="match status" value="1"/>
</dbReference>
<dbReference type="Pfam" id="PF00361">
    <property type="entry name" value="Proton_antipo_M"/>
    <property type="match status" value="1"/>
</dbReference>
<dbReference type="PRINTS" id="PR01434">
    <property type="entry name" value="NADHDHGNASE5"/>
</dbReference>
<reference key="1">
    <citation type="journal article" date="2007" name="PLoS Genet.">
        <title>A tale of two oxidation states: bacterial colonization of arsenic-rich environments.</title>
        <authorList>
            <person name="Muller D."/>
            <person name="Medigue C."/>
            <person name="Koechler S."/>
            <person name="Barbe V."/>
            <person name="Barakat M."/>
            <person name="Talla E."/>
            <person name="Bonnefoy V."/>
            <person name="Krin E."/>
            <person name="Arsene-Ploetze F."/>
            <person name="Carapito C."/>
            <person name="Chandler M."/>
            <person name="Cournoyer B."/>
            <person name="Cruveiller S."/>
            <person name="Dossat C."/>
            <person name="Duval S."/>
            <person name="Heymann M."/>
            <person name="Leize E."/>
            <person name="Lieutaud A."/>
            <person name="Lievremont D."/>
            <person name="Makita Y."/>
            <person name="Mangenot S."/>
            <person name="Nitschke W."/>
            <person name="Ortet P."/>
            <person name="Perdrial N."/>
            <person name="Schoepp B."/>
            <person name="Siguier P."/>
            <person name="Simeonova D.D."/>
            <person name="Rouy Z."/>
            <person name="Segurens B."/>
            <person name="Turlin E."/>
            <person name="Vallenet D."/>
            <person name="van Dorsselaer A."/>
            <person name="Weiss S."/>
            <person name="Weissenbach J."/>
            <person name="Lett M.-C."/>
            <person name="Danchin A."/>
            <person name="Bertin P.N."/>
        </authorList>
    </citation>
    <scope>NUCLEOTIDE SEQUENCE [LARGE SCALE GENOMIC DNA]</scope>
    <source>
        <strain>ULPAs1</strain>
    </source>
</reference>
<proteinExistence type="inferred from homology"/>
<sequence>MNNLNLIPVIPEIFLAAATCAILLIDLFLSDAKRYLTYVLSLATLVVCAVLSLSDFNAGATSYSFGNMFVSDPMSNLLKFCTYIAVGLTLVYSRQYLEDRQMVNGRLGGEFYILSLFTVLGQMVMMSANNFLIIYLGLEIMSLSLYALVAFRRDNAVAIEAAMKYFVLGALASGFLLYGISMLYGATGSLDLTEVARVIATGAVNKPVLIFGLVFVVAGLAFKLGAVPFHMWVPDVYQGAPTAVTLMLGGAPKLAAFAITIRLLVEALPALAIDWQQMLTILSVLSMAIGNITAIMQTNIKRMLAYSTISQVGFILLGLLSGVVAGADGSTTNGYGAAMFYVITYVLTTLGMFGVIMLLSRAGFEADNIDDFKGLNQRSPWFAFVTLLLMFSLAGVPPVVGFYAKLAVLQAVLSTGQIWLAVVAVLFSLIGAFYYLRVVKVMYFDEPADKAKIVASKDVTVTLSINGAALLALGLVPGPLMTACAAAIIKTLAS</sequence>
<comment type="function">
    <text evidence="1">NDH-1 shuttles electrons from NADH, via FMN and iron-sulfur (Fe-S) centers, to quinones in the respiratory chain. The immediate electron acceptor for the enzyme in this species is believed to be ubiquinone. Couples the redox reaction to proton translocation (for every two electrons transferred, four hydrogen ions are translocated across the cytoplasmic membrane), and thus conserves the redox energy in a proton gradient.</text>
</comment>
<comment type="catalytic activity">
    <reaction evidence="1">
        <text>a quinone + NADH + 5 H(+)(in) = a quinol + NAD(+) + 4 H(+)(out)</text>
        <dbReference type="Rhea" id="RHEA:57888"/>
        <dbReference type="ChEBI" id="CHEBI:15378"/>
        <dbReference type="ChEBI" id="CHEBI:24646"/>
        <dbReference type="ChEBI" id="CHEBI:57540"/>
        <dbReference type="ChEBI" id="CHEBI:57945"/>
        <dbReference type="ChEBI" id="CHEBI:132124"/>
    </reaction>
</comment>
<comment type="subunit">
    <text evidence="1">NDH-1 is composed of 14 different subunits. Subunits NuoA, H, J, K, L, M, N constitute the membrane sector of the complex.</text>
</comment>
<comment type="subcellular location">
    <subcellularLocation>
        <location evidence="1">Cell inner membrane</location>
        <topology evidence="1">Multi-pass membrane protein</topology>
    </subcellularLocation>
</comment>
<comment type="similarity">
    <text evidence="1">Belongs to the complex I subunit 2 family.</text>
</comment>
<keyword id="KW-0997">Cell inner membrane</keyword>
<keyword id="KW-1003">Cell membrane</keyword>
<keyword id="KW-0472">Membrane</keyword>
<keyword id="KW-0520">NAD</keyword>
<keyword id="KW-0874">Quinone</keyword>
<keyword id="KW-1185">Reference proteome</keyword>
<keyword id="KW-1278">Translocase</keyword>
<keyword id="KW-0812">Transmembrane</keyword>
<keyword id="KW-1133">Transmembrane helix</keyword>
<keyword id="KW-0813">Transport</keyword>
<keyword id="KW-0830">Ubiquinone</keyword>
<gene>
    <name evidence="1" type="primary">nuoN</name>
    <name type="ordered locus">HEAR1813</name>
</gene>
<feature type="chain" id="PRO_0000391162" description="NADH-quinone oxidoreductase subunit N">
    <location>
        <begin position="1"/>
        <end position="494"/>
    </location>
</feature>
<feature type="transmembrane region" description="Helical" evidence="1">
    <location>
        <begin position="9"/>
        <end position="29"/>
    </location>
</feature>
<feature type="transmembrane region" description="Helical" evidence="1">
    <location>
        <begin position="36"/>
        <end position="56"/>
    </location>
</feature>
<feature type="transmembrane region" description="Helical" evidence="1">
    <location>
        <begin position="73"/>
        <end position="93"/>
    </location>
</feature>
<feature type="transmembrane region" description="Helical" evidence="1">
    <location>
        <begin position="107"/>
        <end position="127"/>
    </location>
</feature>
<feature type="transmembrane region" description="Helical" evidence="1">
    <location>
        <begin position="131"/>
        <end position="151"/>
    </location>
</feature>
<feature type="transmembrane region" description="Helical" evidence="1">
    <location>
        <begin position="166"/>
        <end position="186"/>
    </location>
</feature>
<feature type="transmembrane region" description="Helical" evidence="1">
    <location>
        <begin position="209"/>
        <end position="229"/>
    </location>
</feature>
<feature type="transmembrane region" description="Helical" evidence="1">
    <location>
        <begin position="241"/>
        <end position="261"/>
    </location>
</feature>
<feature type="transmembrane region" description="Helical" evidence="1">
    <location>
        <begin position="278"/>
        <end position="298"/>
    </location>
</feature>
<feature type="transmembrane region" description="Helical" evidence="1">
    <location>
        <begin position="304"/>
        <end position="324"/>
    </location>
</feature>
<feature type="transmembrane region" description="Helical" evidence="1">
    <location>
        <begin position="339"/>
        <end position="359"/>
    </location>
</feature>
<feature type="transmembrane region" description="Helical" evidence="1">
    <location>
        <begin position="382"/>
        <end position="402"/>
    </location>
</feature>
<feature type="transmembrane region" description="Helical" evidence="1">
    <location>
        <begin position="416"/>
        <end position="436"/>
    </location>
</feature>
<feature type="transmembrane region" description="Helical" evidence="1">
    <location>
        <begin position="469"/>
        <end position="489"/>
    </location>
</feature>
<name>NUON_HERAR</name>
<protein>
    <recommendedName>
        <fullName evidence="1">NADH-quinone oxidoreductase subunit N</fullName>
        <ecNumber evidence="1">7.1.1.-</ecNumber>
    </recommendedName>
    <alternativeName>
        <fullName evidence="1">NADH dehydrogenase I subunit N</fullName>
    </alternativeName>
    <alternativeName>
        <fullName evidence="1">NDH-1 subunit N</fullName>
    </alternativeName>
</protein>
<accession>A4G631</accession>
<evidence type="ECO:0000255" key="1">
    <source>
        <dbReference type="HAMAP-Rule" id="MF_00445"/>
    </source>
</evidence>
<organism>
    <name type="scientific">Herminiimonas arsenicoxydans</name>
    <dbReference type="NCBI Taxonomy" id="204773"/>
    <lineage>
        <taxon>Bacteria</taxon>
        <taxon>Pseudomonadati</taxon>
        <taxon>Pseudomonadota</taxon>
        <taxon>Betaproteobacteria</taxon>
        <taxon>Burkholderiales</taxon>
        <taxon>Oxalobacteraceae</taxon>
        <taxon>Herminiimonas</taxon>
    </lineage>
</organism>